<evidence type="ECO:0000255" key="1">
    <source>
        <dbReference type="HAMAP-Rule" id="MF_00409"/>
    </source>
</evidence>
<keyword id="KW-0067">ATP-binding</keyword>
<keyword id="KW-0418">Kinase</keyword>
<keyword id="KW-0441">Lipid A biosynthesis</keyword>
<keyword id="KW-0444">Lipid biosynthesis</keyword>
<keyword id="KW-0443">Lipid metabolism</keyword>
<keyword id="KW-0547">Nucleotide-binding</keyword>
<keyword id="KW-0808">Transferase</keyword>
<comment type="function">
    <text evidence="1">Transfers the gamma-phosphate of ATP to the 4'-position of a tetraacyldisaccharide 1-phosphate intermediate (termed DS-1-P) to form tetraacyldisaccharide 1,4'-bis-phosphate (lipid IVA).</text>
</comment>
<comment type="catalytic activity">
    <reaction evidence="1">
        <text>a lipid A disaccharide + ATP = a lipid IVA + ADP + H(+)</text>
        <dbReference type="Rhea" id="RHEA:67840"/>
        <dbReference type="ChEBI" id="CHEBI:15378"/>
        <dbReference type="ChEBI" id="CHEBI:30616"/>
        <dbReference type="ChEBI" id="CHEBI:176343"/>
        <dbReference type="ChEBI" id="CHEBI:176425"/>
        <dbReference type="ChEBI" id="CHEBI:456216"/>
        <dbReference type="EC" id="2.7.1.130"/>
    </reaction>
</comment>
<comment type="pathway">
    <text evidence="1">Glycolipid biosynthesis; lipid IV(A) biosynthesis; lipid IV(A) from (3R)-3-hydroxytetradecanoyl-[acyl-carrier-protein] and UDP-N-acetyl-alpha-D-glucosamine: step 6/6.</text>
</comment>
<comment type="similarity">
    <text evidence="1">Belongs to the LpxK family.</text>
</comment>
<protein>
    <recommendedName>
        <fullName evidence="1">Tetraacyldisaccharide 4'-kinase</fullName>
        <ecNumber evidence="1">2.7.1.130</ecNumber>
    </recommendedName>
    <alternativeName>
        <fullName evidence="1">Lipid A 4'-kinase</fullName>
    </alternativeName>
</protein>
<organism>
    <name type="scientific">Burkholderia ambifaria (strain MC40-6)</name>
    <dbReference type="NCBI Taxonomy" id="398577"/>
    <lineage>
        <taxon>Bacteria</taxon>
        <taxon>Pseudomonadati</taxon>
        <taxon>Pseudomonadota</taxon>
        <taxon>Betaproteobacteria</taxon>
        <taxon>Burkholderiales</taxon>
        <taxon>Burkholderiaceae</taxon>
        <taxon>Burkholderia</taxon>
        <taxon>Burkholderia cepacia complex</taxon>
    </lineage>
</organism>
<sequence>MSAPGGPLARLEARVTREWQRRGALAWALTPFACVFGLCAALRRTAYAQGWKQPVDVGVPVVVVGNVTVGGTGKTPTVIALVDALRAAGFTPGVVSRGYGANVKTPTAVTPASRASAAGDEPLLIARRTDAPVWVCPDRVAAAQALRAAHPDVDVIVSDDGLQHYRLARTVELVVFDHRLGGNGFLLPAGPLREPLSRHRDATLVNDPYSGALPPWPDTYALALTPGAAWHLDQPALRRPLSQFAHERVLAAAGIGAPERFFATLRAAGLAPATRALPDHYAFADNPFVDDAVDAILITEKDAVKLGASWRDARLWVVPVEAALDPRLIALVVEKLRGRSPA</sequence>
<dbReference type="EC" id="2.7.1.130" evidence="1"/>
<dbReference type="EMBL" id="CP001025">
    <property type="protein sequence ID" value="ACB64941.1"/>
    <property type="molecule type" value="Genomic_DNA"/>
</dbReference>
<dbReference type="RefSeq" id="WP_012364541.1">
    <property type="nucleotide sequence ID" value="NC_010551.1"/>
</dbReference>
<dbReference type="SMR" id="B1YVD7"/>
<dbReference type="KEGG" id="bac:BamMC406_2463"/>
<dbReference type="HOGENOM" id="CLU_038816_2_0_4"/>
<dbReference type="OrthoDB" id="9766423at2"/>
<dbReference type="UniPathway" id="UPA00359">
    <property type="reaction ID" value="UER00482"/>
</dbReference>
<dbReference type="Proteomes" id="UP000001680">
    <property type="component" value="Chromosome 1"/>
</dbReference>
<dbReference type="GO" id="GO:0005886">
    <property type="term" value="C:plasma membrane"/>
    <property type="evidence" value="ECO:0007669"/>
    <property type="project" value="TreeGrafter"/>
</dbReference>
<dbReference type="GO" id="GO:0005524">
    <property type="term" value="F:ATP binding"/>
    <property type="evidence" value="ECO:0007669"/>
    <property type="project" value="UniProtKB-UniRule"/>
</dbReference>
<dbReference type="GO" id="GO:0009029">
    <property type="term" value="F:tetraacyldisaccharide 4'-kinase activity"/>
    <property type="evidence" value="ECO:0007669"/>
    <property type="project" value="UniProtKB-UniRule"/>
</dbReference>
<dbReference type="GO" id="GO:0009245">
    <property type="term" value="P:lipid A biosynthetic process"/>
    <property type="evidence" value="ECO:0007669"/>
    <property type="project" value="UniProtKB-UniRule"/>
</dbReference>
<dbReference type="GO" id="GO:0009244">
    <property type="term" value="P:lipopolysaccharide core region biosynthetic process"/>
    <property type="evidence" value="ECO:0007669"/>
    <property type="project" value="TreeGrafter"/>
</dbReference>
<dbReference type="HAMAP" id="MF_00409">
    <property type="entry name" value="LpxK"/>
    <property type="match status" value="1"/>
</dbReference>
<dbReference type="InterPro" id="IPR003758">
    <property type="entry name" value="LpxK"/>
</dbReference>
<dbReference type="InterPro" id="IPR027417">
    <property type="entry name" value="P-loop_NTPase"/>
</dbReference>
<dbReference type="NCBIfam" id="TIGR00682">
    <property type="entry name" value="lpxK"/>
    <property type="match status" value="1"/>
</dbReference>
<dbReference type="PANTHER" id="PTHR42724">
    <property type="entry name" value="TETRAACYLDISACCHARIDE 4'-KINASE"/>
    <property type="match status" value="1"/>
</dbReference>
<dbReference type="PANTHER" id="PTHR42724:SF1">
    <property type="entry name" value="TETRAACYLDISACCHARIDE 4'-KINASE, MITOCHONDRIAL-RELATED"/>
    <property type="match status" value="1"/>
</dbReference>
<dbReference type="Pfam" id="PF02606">
    <property type="entry name" value="LpxK"/>
    <property type="match status" value="1"/>
</dbReference>
<dbReference type="SUPFAM" id="SSF52540">
    <property type="entry name" value="P-loop containing nucleoside triphosphate hydrolases"/>
    <property type="match status" value="1"/>
</dbReference>
<name>LPXK_BURA4</name>
<proteinExistence type="inferred from homology"/>
<feature type="chain" id="PRO_1000191522" description="Tetraacyldisaccharide 4'-kinase">
    <location>
        <begin position="1"/>
        <end position="342"/>
    </location>
</feature>
<feature type="binding site" evidence="1">
    <location>
        <begin position="68"/>
        <end position="75"/>
    </location>
    <ligand>
        <name>ATP</name>
        <dbReference type="ChEBI" id="CHEBI:30616"/>
    </ligand>
</feature>
<reference key="1">
    <citation type="submission" date="2008-04" db="EMBL/GenBank/DDBJ databases">
        <title>Complete sequence of chromosome 1 of Burkholderia ambifaria MC40-6.</title>
        <authorList>
            <person name="Copeland A."/>
            <person name="Lucas S."/>
            <person name="Lapidus A."/>
            <person name="Glavina del Rio T."/>
            <person name="Dalin E."/>
            <person name="Tice H."/>
            <person name="Pitluck S."/>
            <person name="Chain P."/>
            <person name="Malfatti S."/>
            <person name="Shin M."/>
            <person name="Vergez L."/>
            <person name="Lang D."/>
            <person name="Schmutz J."/>
            <person name="Larimer F."/>
            <person name="Land M."/>
            <person name="Hauser L."/>
            <person name="Kyrpides N."/>
            <person name="Lykidis A."/>
            <person name="Ramette A."/>
            <person name="Konstantinidis K."/>
            <person name="Tiedje J."/>
            <person name="Richardson P."/>
        </authorList>
    </citation>
    <scope>NUCLEOTIDE SEQUENCE [LARGE SCALE GENOMIC DNA]</scope>
    <source>
        <strain>MC40-6</strain>
    </source>
</reference>
<gene>
    <name evidence="1" type="primary">lpxK</name>
    <name type="ordered locus">BamMC406_2463</name>
</gene>
<accession>B1YVD7</accession>